<organism>
    <name type="scientific">Mus musculus</name>
    <name type="common">Mouse</name>
    <dbReference type="NCBI Taxonomy" id="10090"/>
    <lineage>
        <taxon>Eukaryota</taxon>
        <taxon>Metazoa</taxon>
        <taxon>Chordata</taxon>
        <taxon>Craniata</taxon>
        <taxon>Vertebrata</taxon>
        <taxon>Euteleostomi</taxon>
        <taxon>Mammalia</taxon>
        <taxon>Eutheria</taxon>
        <taxon>Euarchontoglires</taxon>
        <taxon>Glires</taxon>
        <taxon>Rodentia</taxon>
        <taxon>Myomorpha</taxon>
        <taxon>Muroidea</taxon>
        <taxon>Muridae</taxon>
        <taxon>Murinae</taxon>
        <taxon>Mus</taxon>
        <taxon>Mus</taxon>
    </lineage>
</organism>
<protein>
    <recommendedName>
        <fullName>F-box only protein 27</fullName>
    </recommendedName>
</protein>
<proteinExistence type="evidence at transcript level"/>
<reference key="1">
    <citation type="journal article" date="2005" name="Science">
        <title>The transcriptional landscape of the mammalian genome.</title>
        <authorList>
            <person name="Carninci P."/>
            <person name="Kasukawa T."/>
            <person name="Katayama S."/>
            <person name="Gough J."/>
            <person name="Frith M.C."/>
            <person name="Maeda N."/>
            <person name="Oyama R."/>
            <person name="Ravasi T."/>
            <person name="Lenhard B."/>
            <person name="Wells C."/>
            <person name="Kodzius R."/>
            <person name="Shimokawa K."/>
            <person name="Bajic V.B."/>
            <person name="Brenner S.E."/>
            <person name="Batalov S."/>
            <person name="Forrest A.R."/>
            <person name="Zavolan M."/>
            <person name="Davis M.J."/>
            <person name="Wilming L.G."/>
            <person name="Aidinis V."/>
            <person name="Allen J.E."/>
            <person name="Ambesi-Impiombato A."/>
            <person name="Apweiler R."/>
            <person name="Aturaliya R.N."/>
            <person name="Bailey T.L."/>
            <person name="Bansal M."/>
            <person name="Baxter L."/>
            <person name="Beisel K.W."/>
            <person name="Bersano T."/>
            <person name="Bono H."/>
            <person name="Chalk A.M."/>
            <person name="Chiu K.P."/>
            <person name="Choudhary V."/>
            <person name="Christoffels A."/>
            <person name="Clutterbuck D.R."/>
            <person name="Crowe M.L."/>
            <person name="Dalla E."/>
            <person name="Dalrymple B.P."/>
            <person name="de Bono B."/>
            <person name="Della Gatta G."/>
            <person name="di Bernardo D."/>
            <person name="Down T."/>
            <person name="Engstrom P."/>
            <person name="Fagiolini M."/>
            <person name="Faulkner G."/>
            <person name="Fletcher C.F."/>
            <person name="Fukushima T."/>
            <person name="Furuno M."/>
            <person name="Futaki S."/>
            <person name="Gariboldi M."/>
            <person name="Georgii-Hemming P."/>
            <person name="Gingeras T.R."/>
            <person name="Gojobori T."/>
            <person name="Green R.E."/>
            <person name="Gustincich S."/>
            <person name="Harbers M."/>
            <person name="Hayashi Y."/>
            <person name="Hensch T.K."/>
            <person name="Hirokawa N."/>
            <person name="Hill D."/>
            <person name="Huminiecki L."/>
            <person name="Iacono M."/>
            <person name="Ikeo K."/>
            <person name="Iwama A."/>
            <person name="Ishikawa T."/>
            <person name="Jakt M."/>
            <person name="Kanapin A."/>
            <person name="Katoh M."/>
            <person name="Kawasawa Y."/>
            <person name="Kelso J."/>
            <person name="Kitamura H."/>
            <person name="Kitano H."/>
            <person name="Kollias G."/>
            <person name="Krishnan S.P."/>
            <person name="Kruger A."/>
            <person name="Kummerfeld S.K."/>
            <person name="Kurochkin I.V."/>
            <person name="Lareau L.F."/>
            <person name="Lazarevic D."/>
            <person name="Lipovich L."/>
            <person name="Liu J."/>
            <person name="Liuni S."/>
            <person name="McWilliam S."/>
            <person name="Madan Babu M."/>
            <person name="Madera M."/>
            <person name="Marchionni L."/>
            <person name="Matsuda H."/>
            <person name="Matsuzawa S."/>
            <person name="Miki H."/>
            <person name="Mignone F."/>
            <person name="Miyake S."/>
            <person name="Morris K."/>
            <person name="Mottagui-Tabar S."/>
            <person name="Mulder N."/>
            <person name="Nakano N."/>
            <person name="Nakauchi H."/>
            <person name="Ng P."/>
            <person name="Nilsson R."/>
            <person name="Nishiguchi S."/>
            <person name="Nishikawa S."/>
            <person name="Nori F."/>
            <person name="Ohara O."/>
            <person name="Okazaki Y."/>
            <person name="Orlando V."/>
            <person name="Pang K.C."/>
            <person name="Pavan W.J."/>
            <person name="Pavesi G."/>
            <person name="Pesole G."/>
            <person name="Petrovsky N."/>
            <person name="Piazza S."/>
            <person name="Reed J."/>
            <person name="Reid J.F."/>
            <person name="Ring B.Z."/>
            <person name="Ringwald M."/>
            <person name="Rost B."/>
            <person name="Ruan Y."/>
            <person name="Salzberg S.L."/>
            <person name="Sandelin A."/>
            <person name="Schneider C."/>
            <person name="Schoenbach C."/>
            <person name="Sekiguchi K."/>
            <person name="Semple C.A."/>
            <person name="Seno S."/>
            <person name="Sessa L."/>
            <person name="Sheng Y."/>
            <person name="Shibata Y."/>
            <person name="Shimada H."/>
            <person name="Shimada K."/>
            <person name="Silva D."/>
            <person name="Sinclair B."/>
            <person name="Sperling S."/>
            <person name="Stupka E."/>
            <person name="Sugiura K."/>
            <person name="Sultana R."/>
            <person name="Takenaka Y."/>
            <person name="Taki K."/>
            <person name="Tammoja K."/>
            <person name="Tan S.L."/>
            <person name="Tang S."/>
            <person name="Taylor M.S."/>
            <person name="Tegner J."/>
            <person name="Teichmann S.A."/>
            <person name="Ueda H.R."/>
            <person name="van Nimwegen E."/>
            <person name="Verardo R."/>
            <person name="Wei C.L."/>
            <person name="Yagi K."/>
            <person name="Yamanishi H."/>
            <person name="Zabarovsky E."/>
            <person name="Zhu S."/>
            <person name="Zimmer A."/>
            <person name="Hide W."/>
            <person name="Bult C."/>
            <person name="Grimmond S.M."/>
            <person name="Teasdale R.D."/>
            <person name="Liu E.T."/>
            <person name="Brusic V."/>
            <person name="Quackenbush J."/>
            <person name="Wahlestedt C."/>
            <person name="Mattick J.S."/>
            <person name="Hume D.A."/>
            <person name="Kai C."/>
            <person name="Sasaki D."/>
            <person name="Tomaru Y."/>
            <person name="Fukuda S."/>
            <person name="Kanamori-Katayama M."/>
            <person name="Suzuki M."/>
            <person name="Aoki J."/>
            <person name="Arakawa T."/>
            <person name="Iida J."/>
            <person name="Imamura K."/>
            <person name="Itoh M."/>
            <person name="Kato T."/>
            <person name="Kawaji H."/>
            <person name="Kawagashira N."/>
            <person name="Kawashima T."/>
            <person name="Kojima M."/>
            <person name="Kondo S."/>
            <person name="Konno H."/>
            <person name="Nakano K."/>
            <person name="Ninomiya N."/>
            <person name="Nishio T."/>
            <person name="Okada M."/>
            <person name="Plessy C."/>
            <person name="Shibata K."/>
            <person name="Shiraki T."/>
            <person name="Suzuki S."/>
            <person name="Tagami M."/>
            <person name="Waki K."/>
            <person name="Watahiki A."/>
            <person name="Okamura-Oho Y."/>
            <person name="Suzuki H."/>
            <person name="Kawai J."/>
            <person name="Hayashizaki Y."/>
        </authorList>
    </citation>
    <scope>NUCLEOTIDE SEQUENCE [LARGE SCALE MRNA] (ISOFORMS 1 AND 2)</scope>
    <source>
        <strain>C57BL/6J</strain>
        <tissue>Corpora quadrigemina</tissue>
        <tissue>Eye</tissue>
        <tissue>Inner ear</tissue>
    </source>
</reference>
<reference key="2">
    <citation type="journal article" date="2004" name="Genome Res.">
        <title>The status, quality, and expansion of the NIH full-length cDNA project: the Mammalian Gene Collection (MGC).</title>
        <authorList>
            <consortium name="The MGC Project Team"/>
        </authorList>
    </citation>
    <scope>NUCLEOTIDE SEQUENCE [LARGE SCALE MRNA] (ISOFORM 1)</scope>
    <source>
        <strain>C57BL/6J</strain>
        <tissue>Eye</tissue>
    </source>
</reference>
<reference key="3">
    <citation type="journal article" date="2008" name="J. Biol. Chem.">
        <title>Diversity in tissue expression, substrate binding, and SCF complex formation for a lectin family of ubiquitin ligases.</title>
        <authorList>
            <person name="Glenn K.A."/>
            <person name="Nelson R.F."/>
            <person name="Wen H.M."/>
            <person name="Mallinger A.J."/>
            <person name="Paulson H.L."/>
        </authorList>
    </citation>
    <scope>TISSUE SPECIFICITY</scope>
</reference>
<evidence type="ECO:0000250" key="1"/>
<evidence type="ECO:0000255" key="2">
    <source>
        <dbReference type="PROSITE-ProRule" id="PRU00080"/>
    </source>
</evidence>
<evidence type="ECO:0000255" key="3">
    <source>
        <dbReference type="PROSITE-ProRule" id="PRU00482"/>
    </source>
</evidence>
<evidence type="ECO:0000269" key="4">
    <source>
    </source>
</evidence>
<evidence type="ECO:0000303" key="5">
    <source>
    </source>
</evidence>
<evidence type="ECO:0000305" key="6"/>
<name>FBX27_MOUSE</name>
<keyword id="KW-0025">Alternative splicing</keyword>
<keyword id="KW-1185">Reference proteome</keyword>
<keyword id="KW-0833">Ubl conjugation pathway</keyword>
<accession>Q6DIA9</accession>
<accession>Q3TYP0</accession>
<accession>Q8BKF7</accession>
<dbReference type="EMBL" id="AK053292">
    <property type="protein sequence ID" value="BAC35334.1"/>
    <property type="molecule type" value="mRNA"/>
</dbReference>
<dbReference type="EMBL" id="AK140275">
    <property type="protein sequence ID" value="BAE24311.1"/>
    <property type="molecule type" value="mRNA"/>
</dbReference>
<dbReference type="EMBL" id="AK158463">
    <property type="protein sequence ID" value="BAE34522.1"/>
    <property type="molecule type" value="mRNA"/>
</dbReference>
<dbReference type="EMBL" id="BC075656">
    <property type="protein sequence ID" value="AAH75656.1"/>
    <property type="molecule type" value="mRNA"/>
</dbReference>
<dbReference type="CCDS" id="CCDS21051.1">
    <molecule id="Q6DIA9-2"/>
</dbReference>
<dbReference type="CCDS" id="CCDS52164.1">
    <molecule id="Q6DIA9-1"/>
</dbReference>
<dbReference type="RefSeq" id="NP_001157174.1">
    <molecule id="Q6DIA9-1"/>
    <property type="nucleotide sequence ID" value="NM_001163702.1"/>
</dbReference>
<dbReference type="RefSeq" id="NP_001342086.1">
    <molecule id="Q6DIA9-1"/>
    <property type="nucleotide sequence ID" value="NM_001355157.1"/>
</dbReference>
<dbReference type="RefSeq" id="NP_997121.1">
    <molecule id="Q6DIA9-2"/>
    <property type="nucleotide sequence ID" value="NM_207238.3"/>
</dbReference>
<dbReference type="RefSeq" id="XP_006539929.1">
    <property type="nucleotide sequence ID" value="XM_006539866.1"/>
</dbReference>
<dbReference type="RefSeq" id="XP_006539930.1">
    <molecule id="Q6DIA9-1"/>
    <property type="nucleotide sequence ID" value="XM_006539867.5"/>
</dbReference>
<dbReference type="SMR" id="Q6DIA9"/>
<dbReference type="FunCoup" id="Q6DIA9">
    <property type="interactions" value="55"/>
</dbReference>
<dbReference type="STRING" id="10090.ENSMUSP00000103916"/>
<dbReference type="GlyGen" id="Q6DIA9">
    <property type="glycosylation" value="1 site, 1 N-linked glycan (1 site)"/>
</dbReference>
<dbReference type="PhosphoSitePlus" id="Q6DIA9"/>
<dbReference type="PaxDb" id="10090-ENSMUSP00000103916"/>
<dbReference type="ProteomicsDB" id="267578">
    <molecule id="Q6DIA9-1"/>
</dbReference>
<dbReference type="ProteomicsDB" id="267579">
    <molecule id="Q6DIA9-2"/>
</dbReference>
<dbReference type="Antibodypedia" id="30249">
    <property type="antibodies" value="130 antibodies from 22 providers"/>
</dbReference>
<dbReference type="DNASU" id="233040"/>
<dbReference type="Ensembl" id="ENSMUST00000039998.11">
    <molecule id="Q6DIA9-2"/>
    <property type="protein sequence ID" value="ENSMUSP00000038432.5"/>
    <property type="gene ID" value="ENSMUSG00000037463.15"/>
</dbReference>
<dbReference type="Ensembl" id="ENSMUST00000108281.8">
    <molecule id="Q6DIA9-1"/>
    <property type="protein sequence ID" value="ENSMUSP00000103916.2"/>
    <property type="gene ID" value="ENSMUSG00000037463.15"/>
</dbReference>
<dbReference type="GeneID" id="233040"/>
<dbReference type="KEGG" id="mmu:233040"/>
<dbReference type="UCSC" id="uc009fzk.2">
    <molecule id="Q6DIA9-1"/>
    <property type="organism name" value="mouse"/>
</dbReference>
<dbReference type="UCSC" id="uc012fgv.1">
    <molecule id="Q6DIA9-2"/>
    <property type="organism name" value="mouse"/>
</dbReference>
<dbReference type="AGR" id="MGI:2685007"/>
<dbReference type="CTD" id="126433"/>
<dbReference type="MGI" id="MGI:2685007">
    <property type="gene designation" value="Fbxo27"/>
</dbReference>
<dbReference type="VEuPathDB" id="HostDB:ENSMUSG00000037463"/>
<dbReference type="eggNOG" id="ENOG502RZA6">
    <property type="taxonomic scope" value="Eukaryota"/>
</dbReference>
<dbReference type="GeneTree" id="ENSGT00940000161841"/>
<dbReference type="HOGENOM" id="CLU_068548_0_0_1"/>
<dbReference type="InParanoid" id="Q6DIA9"/>
<dbReference type="OMA" id="TCFASSY"/>
<dbReference type="OrthoDB" id="1107553at2759"/>
<dbReference type="PhylomeDB" id="Q6DIA9"/>
<dbReference type="TreeFam" id="TF320527"/>
<dbReference type="Reactome" id="R-MMU-8951664">
    <property type="pathway name" value="Neddylation"/>
</dbReference>
<dbReference type="Reactome" id="R-MMU-983168">
    <property type="pathway name" value="Antigen processing: Ubiquitination &amp; Proteasome degradation"/>
</dbReference>
<dbReference type="BioGRID-ORCS" id="233040">
    <property type="hits" value="2 hits in 77 CRISPR screens"/>
</dbReference>
<dbReference type="PRO" id="PR:Q6DIA9"/>
<dbReference type="Proteomes" id="UP000000589">
    <property type="component" value="Chromosome 7"/>
</dbReference>
<dbReference type="RNAct" id="Q6DIA9">
    <property type="molecule type" value="protein"/>
</dbReference>
<dbReference type="Bgee" id="ENSMUSG00000037463">
    <property type="expression patterns" value="Expressed in retinal neural layer and 132 other cell types or tissues"/>
</dbReference>
<dbReference type="ExpressionAtlas" id="Q6DIA9">
    <property type="expression patterns" value="baseline and differential"/>
</dbReference>
<dbReference type="GO" id="GO:0005737">
    <property type="term" value="C:cytoplasm"/>
    <property type="evidence" value="ECO:0007669"/>
    <property type="project" value="UniProtKB-ARBA"/>
</dbReference>
<dbReference type="GO" id="GO:0019005">
    <property type="term" value="C:SCF ubiquitin ligase complex"/>
    <property type="evidence" value="ECO:0000250"/>
    <property type="project" value="UniProtKB"/>
</dbReference>
<dbReference type="FunFam" id="2.60.120.260:FF:000012">
    <property type="entry name" value="F-box only protein 2"/>
    <property type="match status" value="1"/>
</dbReference>
<dbReference type="FunFam" id="1.20.1280.50:FF:000002">
    <property type="entry name" value="F-box only protein 44"/>
    <property type="match status" value="1"/>
</dbReference>
<dbReference type="Gene3D" id="1.20.1280.50">
    <property type="match status" value="1"/>
</dbReference>
<dbReference type="Gene3D" id="2.60.120.260">
    <property type="entry name" value="Galactose-binding domain-like"/>
    <property type="match status" value="1"/>
</dbReference>
<dbReference type="InterPro" id="IPR007397">
    <property type="entry name" value="F-box-assoc_dom"/>
</dbReference>
<dbReference type="InterPro" id="IPR036047">
    <property type="entry name" value="F-box-like_dom_sf"/>
</dbReference>
<dbReference type="InterPro" id="IPR001810">
    <property type="entry name" value="F-box_dom"/>
</dbReference>
<dbReference type="InterPro" id="IPR039752">
    <property type="entry name" value="F-box_only"/>
</dbReference>
<dbReference type="InterPro" id="IPR008979">
    <property type="entry name" value="Galactose-bd-like_sf"/>
</dbReference>
<dbReference type="PANTHER" id="PTHR12125:SF9">
    <property type="entry name" value="F-BOX ONLY PROTEIN 27"/>
    <property type="match status" value="1"/>
</dbReference>
<dbReference type="PANTHER" id="PTHR12125">
    <property type="entry name" value="F-BOX ONLY PROTEIN 6-LIKE PROTEIN"/>
    <property type="match status" value="1"/>
</dbReference>
<dbReference type="Pfam" id="PF00646">
    <property type="entry name" value="F-box"/>
    <property type="match status" value="1"/>
</dbReference>
<dbReference type="Pfam" id="PF04300">
    <property type="entry name" value="FBA"/>
    <property type="match status" value="1"/>
</dbReference>
<dbReference type="SMART" id="SM01198">
    <property type="entry name" value="FBA"/>
    <property type="match status" value="1"/>
</dbReference>
<dbReference type="SMART" id="SM00256">
    <property type="entry name" value="FBOX"/>
    <property type="match status" value="1"/>
</dbReference>
<dbReference type="SUPFAM" id="SSF81383">
    <property type="entry name" value="F-box domain"/>
    <property type="match status" value="1"/>
</dbReference>
<dbReference type="SUPFAM" id="SSF49785">
    <property type="entry name" value="Galactose-binding domain-like"/>
    <property type="match status" value="1"/>
</dbReference>
<dbReference type="PROSITE" id="PS51114">
    <property type="entry name" value="FBA"/>
    <property type="match status" value="1"/>
</dbReference>
<dbReference type="PROSITE" id="PS50181">
    <property type="entry name" value="FBOX"/>
    <property type="match status" value="1"/>
</dbReference>
<comment type="function">
    <text evidence="1">Substrate-recognition component of the SCF (SKP1-CUL1-F-box protein)-type E3 ubiquitin ligase complex. Able to recognize and bind complex-type oligosaccharides.</text>
</comment>
<comment type="subunit">
    <text evidence="1">Part of a SCF (SKP1-cullin-F-box) protein ligase complex. Interacts with SKP1 and CUL1 (By similarity).</text>
</comment>
<comment type="alternative products">
    <event type="alternative splicing"/>
    <isoform>
        <id>Q6DIA9-1</id>
        <name>1</name>
        <sequence type="displayed"/>
    </isoform>
    <isoform>
        <id>Q6DIA9-2</id>
        <name>2</name>
        <sequence type="described" ref="VSP_013054"/>
    </isoform>
</comment>
<comment type="tissue specificity">
    <text evidence="4">Detected in brain, heart and muscle.</text>
</comment>
<comment type="miscellaneous">
    <molecule>Isoform 2</molecule>
    <text evidence="6">May be due to a competing acceptor splice site.</text>
</comment>
<feature type="chain" id="PRO_0000119916" description="F-box only protein 27">
    <location>
        <begin position="1"/>
        <end position="280"/>
    </location>
</feature>
<feature type="domain" description="F-box" evidence="2">
    <location>
        <begin position="20"/>
        <end position="67"/>
    </location>
</feature>
<feature type="domain" description="FBA" evidence="3">
    <location>
        <begin position="101"/>
        <end position="277"/>
    </location>
</feature>
<feature type="splice variant" id="VSP_013054" description="In isoform 2." evidence="5">
    <location>
        <position position="119"/>
    </location>
</feature>
<sequence length="280" mass="31633">MGAWISRTRVPTPEPDPQEVLDLSRLPPELLLLVLSHVPPRTLLMHCRRVCRAWRALVDGQALWLLLLARDHSAAGRALLTLARRCLPPAHEDTPCPLGQFCALRPLGRNLISNPCGQEGLRKWMVRHGGDGWVVEKNRKPVPGAPSQTCFVTSFSWCRKKQVVDLVEKGLWPELLDSGGVEIAVSDWWGARHDSGCKYRLFVTLLDAHQNVIDKFSAVPDPIEQWNNDIYLQVTHVFSGIRRGIRFVSFEHWGQDTQFWAGHYGARVTNSSVIIRVCQS</sequence>
<gene>
    <name type="primary">Fbxo27</name>
</gene>